<reference key="1">
    <citation type="journal article" date="2007" name="ISME J.">
        <title>Population level functional diversity in a microbial community revealed by comparative genomic and metagenomic analyses.</title>
        <authorList>
            <person name="Bhaya D."/>
            <person name="Grossman A.R."/>
            <person name="Steunou A.-S."/>
            <person name="Khuri N."/>
            <person name="Cohan F.M."/>
            <person name="Hamamura N."/>
            <person name="Melendrez M.C."/>
            <person name="Bateson M.M."/>
            <person name="Ward D.M."/>
            <person name="Heidelberg J.F."/>
        </authorList>
    </citation>
    <scope>NUCLEOTIDE SEQUENCE [LARGE SCALE GENOMIC DNA]</scope>
    <source>
        <strain>JA-3-3Ab</strain>
    </source>
</reference>
<comment type="function">
    <text evidence="1">Binds to the 23S rRNA.</text>
</comment>
<comment type="subunit">
    <text evidence="1">Part of the 50S ribosomal subunit.</text>
</comment>
<comment type="similarity">
    <text evidence="1">Belongs to the universal ribosomal protein uL15 family.</text>
</comment>
<keyword id="KW-0687">Ribonucleoprotein</keyword>
<keyword id="KW-0689">Ribosomal protein</keyword>
<keyword id="KW-0694">RNA-binding</keyword>
<keyword id="KW-0699">rRNA-binding</keyword>
<gene>
    <name evidence="1" type="primary">rplO</name>
    <name type="ordered locus">CYA_1161</name>
</gene>
<proteinExistence type="inferred from homology"/>
<dbReference type="EMBL" id="CP000239">
    <property type="protein sequence ID" value="ABC99349.1"/>
    <property type="molecule type" value="Genomic_DNA"/>
</dbReference>
<dbReference type="RefSeq" id="WP_011430030.1">
    <property type="nucleotide sequence ID" value="NC_007775.1"/>
</dbReference>
<dbReference type="SMR" id="Q2JV94"/>
<dbReference type="STRING" id="321327.CYA_1161"/>
<dbReference type="KEGG" id="cya:CYA_1161"/>
<dbReference type="eggNOG" id="COG0200">
    <property type="taxonomic scope" value="Bacteria"/>
</dbReference>
<dbReference type="HOGENOM" id="CLU_055188_4_2_3"/>
<dbReference type="OrthoDB" id="9810293at2"/>
<dbReference type="Proteomes" id="UP000008818">
    <property type="component" value="Chromosome"/>
</dbReference>
<dbReference type="GO" id="GO:0022625">
    <property type="term" value="C:cytosolic large ribosomal subunit"/>
    <property type="evidence" value="ECO:0007669"/>
    <property type="project" value="TreeGrafter"/>
</dbReference>
<dbReference type="GO" id="GO:0019843">
    <property type="term" value="F:rRNA binding"/>
    <property type="evidence" value="ECO:0007669"/>
    <property type="project" value="UniProtKB-UniRule"/>
</dbReference>
<dbReference type="GO" id="GO:0003735">
    <property type="term" value="F:structural constituent of ribosome"/>
    <property type="evidence" value="ECO:0007669"/>
    <property type="project" value="InterPro"/>
</dbReference>
<dbReference type="GO" id="GO:0006412">
    <property type="term" value="P:translation"/>
    <property type="evidence" value="ECO:0007669"/>
    <property type="project" value="UniProtKB-UniRule"/>
</dbReference>
<dbReference type="Gene3D" id="3.100.10.10">
    <property type="match status" value="1"/>
</dbReference>
<dbReference type="HAMAP" id="MF_01341">
    <property type="entry name" value="Ribosomal_uL15"/>
    <property type="match status" value="1"/>
</dbReference>
<dbReference type="InterPro" id="IPR030878">
    <property type="entry name" value="Ribosomal_uL15"/>
</dbReference>
<dbReference type="InterPro" id="IPR021131">
    <property type="entry name" value="Ribosomal_uL15/eL18"/>
</dbReference>
<dbReference type="InterPro" id="IPR036227">
    <property type="entry name" value="Ribosomal_uL15/eL18_sf"/>
</dbReference>
<dbReference type="InterPro" id="IPR005749">
    <property type="entry name" value="Ribosomal_uL15_bac-type"/>
</dbReference>
<dbReference type="InterPro" id="IPR001196">
    <property type="entry name" value="Ribosomal_uL15_CS"/>
</dbReference>
<dbReference type="NCBIfam" id="TIGR01071">
    <property type="entry name" value="rplO_bact"/>
    <property type="match status" value="1"/>
</dbReference>
<dbReference type="PANTHER" id="PTHR12934">
    <property type="entry name" value="50S RIBOSOMAL PROTEIN L15"/>
    <property type="match status" value="1"/>
</dbReference>
<dbReference type="PANTHER" id="PTHR12934:SF11">
    <property type="entry name" value="LARGE RIBOSOMAL SUBUNIT PROTEIN UL15M"/>
    <property type="match status" value="1"/>
</dbReference>
<dbReference type="Pfam" id="PF00828">
    <property type="entry name" value="Ribosomal_L27A"/>
    <property type="match status" value="1"/>
</dbReference>
<dbReference type="SUPFAM" id="SSF52080">
    <property type="entry name" value="Ribosomal proteins L15p and L18e"/>
    <property type="match status" value="1"/>
</dbReference>
<dbReference type="PROSITE" id="PS00475">
    <property type="entry name" value="RIBOSOMAL_L15"/>
    <property type="match status" value="1"/>
</dbReference>
<organism>
    <name type="scientific">Synechococcus sp. (strain JA-3-3Ab)</name>
    <name type="common">Cyanobacteria bacterium Yellowstone A-Prime</name>
    <dbReference type="NCBI Taxonomy" id="321327"/>
    <lineage>
        <taxon>Bacteria</taxon>
        <taxon>Bacillati</taxon>
        <taxon>Cyanobacteriota</taxon>
        <taxon>Cyanophyceae</taxon>
        <taxon>Synechococcales</taxon>
        <taxon>Synechococcaceae</taxon>
        <taxon>Synechococcus</taxon>
    </lineage>
</organism>
<sequence>MRLEDIRPQPGSTRRRRRLGRGIAAGQGASCGKGMRGQKARKGGGPRPGFEGGQTPLYRRLPKLKHFPRYVRRPQYTLINLRALAKLPAGSEVSLESLMDLGIVTTNDGPLKILGDGEVGVPLTIRAAAITPSARAKVEAAGGRVELVGSQTASAGS</sequence>
<name>RL15_SYNJA</name>
<evidence type="ECO:0000255" key="1">
    <source>
        <dbReference type="HAMAP-Rule" id="MF_01341"/>
    </source>
</evidence>
<evidence type="ECO:0000256" key="2">
    <source>
        <dbReference type="SAM" id="MobiDB-lite"/>
    </source>
</evidence>
<evidence type="ECO:0000305" key="3"/>
<protein>
    <recommendedName>
        <fullName evidence="1">Large ribosomal subunit protein uL15</fullName>
    </recommendedName>
    <alternativeName>
        <fullName evidence="3">50S ribosomal protein L15</fullName>
    </alternativeName>
</protein>
<accession>Q2JV94</accession>
<feature type="chain" id="PRO_0000251576" description="Large ribosomal subunit protein uL15">
    <location>
        <begin position="1"/>
        <end position="157"/>
    </location>
</feature>
<feature type="region of interest" description="Disordered" evidence="2">
    <location>
        <begin position="1"/>
        <end position="56"/>
    </location>
</feature>
<feature type="compositionally biased region" description="Gly residues" evidence="2">
    <location>
        <begin position="23"/>
        <end position="35"/>
    </location>
</feature>